<proteinExistence type="evidence at protein level"/>
<feature type="peptide" id="PRO_0000404691" description="[Ala1,Thr6,Ala11]-phyllokinin" evidence="2">
    <location>
        <begin position="1"/>
        <end position="11"/>
    </location>
</feature>
<evidence type="ECO:0000250" key="1"/>
<evidence type="ECO:0000269" key="2">
    <source ref="1"/>
</evidence>
<evidence type="ECO:0000303" key="3">
    <source ref="1"/>
</evidence>
<evidence type="ECO:0000305" key="4"/>
<reference evidence="4" key="1">
    <citation type="submission" date="2010-09" db="UniProtKB">
        <title>Bradykinin-related peptides in skin secretion of Physalaemus signifer (Girard, 1853) (Anura, Leiuperidae).</title>
        <authorList>
            <person name="Rates B."/>
            <person name="Ireno I.C."/>
            <person name="Canelas M.A."/>
            <person name="de Lima M.E."/>
            <person name="Pimenta A.M.C."/>
        </authorList>
    </citation>
    <scope>PROTEIN SEQUENCE</scope>
    <scope>SUBCELLULAR LOCATION</scope>
    <scope>TISSUE SPECIFICITY</scope>
    <source>
        <tissue evidence="2">Skin secretion</tissue>
    </source>
</reference>
<sequence>APPGFTPFRIA</sequence>
<comment type="function">
    <text evidence="1">Produces in vitro relaxation of rat arterial smooth muscle and constriction of intestinal smooth muscle (By similarity). May target bradykinin receptors (BDKRB).</text>
</comment>
<comment type="subcellular location">
    <subcellularLocation>
        <location evidence="2">Secreted</location>
    </subcellularLocation>
</comment>
<comment type="tissue specificity">
    <text evidence="2">Expressed by the skin glands.</text>
</comment>
<comment type="similarity">
    <text evidence="4">Belongs to the bradykinin-related peptide family.</text>
</comment>
<name>BRK6_PHYSG</name>
<keyword id="KW-0878">Amphibian defense peptide</keyword>
<keyword id="KW-0903">Direct protein sequencing</keyword>
<keyword id="KW-1213">G-protein coupled receptor impairing toxin</keyword>
<keyword id="KW-0964">Secreted</keyword>
<keyword id="KW-0800">Toxin</keyword>
<keyword id="KW-0838">Vasoactive</keyword>
<keyword id="KW-0840">Vasodilator</keyword>
<dbReference type="GO" id="GO:0005576">
    <property type="term" value="C:extracellular region"/>
    <property type="evidence" value="ECO:0007669"/>
    <property type="project" value="UniProtKB-SubCell"/>
</dbReference>
<dbReference type="GO" id="GO:0090729">
    <property type="term" value="F:toxin activity"/>
    <property type="evidence" value="ECO:0007669"/>
    <property type="project" value="UniProtKB-KW"/>
</dbReference>
<dbReference type="GO" id="GO:0006952">
    <property type="term" value="P:defense response"/>
    <property type="evidence" value="ECO:0007669"/>
    <property type="project" value="UniProtKB-KW"/>
</dbReference>
<dbReference type="GO" id="GO:0042311">
    <property type="term" value="P:vasodilation"/>
    <property type="evidence" value="ECO:0007669"/>
    <property type="project" value="UniProtKB-KW"/>
</dbReference>
<accession>P86816</accession>
<organism>
    <name type="scientific">Physalaemus signifer</name>
    <name type="common">Girard's dwarf frog</name>
    <dbReference type="NCBI Taxonomy" id="364768"/>
    <lineage>
        <taxon>Eukaryota</taxon>
        <taxon>Metazoa</taxon>
        <taxon>Chordata</taxon>
        <taxon>Craniata</taxon>
        <taxon>Vertebrata</taxon>
        <taxon>Euteleostomi</taxon>
        <taxon>Amphibia</taxon>
        <taxon>Batrachia</taxon>
        <taxon>Anura</taxon>
        <taxon>Neobatrachia</taxon>
        <taxon>Hyloidea</taxon>
        <taxon>Leptodactylidae</taxon>
        <taxon>Leiuperinae</taxon>
        <taxon>Physalaemus</taxon>
    </lineage>
</organism>
<protein>
    <recommendedName>
        <fullName evidence="3">[Ala1,Thr6,Ala11]-phyllokinin</fullName>
    </recommendedName>
</protein>